<accession>A8G9S8</accession>
<protein>
    <recommendedName>
        <fullName evidence="1">UDP-N-acetylmuramate--L-alanine ligase</fullName>
        <ecNumber evidence="1">6.3.2.8</ecNumber>
    </recommendedName>
    <alternativeName>
        <fullName evidence="1">UDP-N-acetylmuramoyl-L-alanine synthetase</fullName>
    </alternativeName>
</protein>
<reference key="1">
    <citation type="submission" date="2007-09" db="EMBL/GenBank/DDBJ databases">
        <title>Complete sequence of chromosome of Serratia proteamaculans 568.</title>
        <authorList>
            <consortium name="US DOE Joint Genome Institute"/>
            <person name="Copeland A."/>
            <person name="Lucas S."/>
            <person name="Lapidus A."/>
            <person name="Barry K."/>
            <person name="Glavina del Rio T."/>
            <person name="Dalin E."/>
            <person name="Tice H."/>
            <person name="Pitluck S."/>
            <person name="Chain P."/>
            <person name="Malfatti S."/>
            <person name="Shin M."/>
            <person name="Vergez L."/>
            <person name="Schmutz J."/>
            <person name="Larimer F."/>
            <person name="Land M."/>
            <person name="Hauser L."/>
            <person name="Kyrpides N."/>
            <person name="Kim E."/>
            <person name="Taghavi S."/>
            <person name="Newman L."/>
            <person name="Vangronsveld J."/>
            <person name="van der Lelie D."/>
            <person name="Richardson P."/>
        </authorList>
    </citation>
    <scope>NUCLEOTIDE SEQUENCE [LARGE SCALE GENOMIC DNA]</scope>
    <source>
        <strain>568</strain>
    </source>
</reference>
<sequence>MNTQQLAKLRTIVPEMRRVRHIHFVGIGGAGMGGIAEVLANEGYQISGSDLAPNPVTQQLSALGATIYFHHRPENVLDASVVVVSTAISADNPELVAAREARIPVIRRAEMLAELMRFRHGIAVAGTHGKTTTTAMVSSIYAEAGLDPTFVNGGLVKAAGTHARLGSSRYLIAEADESDASFLHLQPMVAIVTNIEADHMETYQGDFENLKQTFINFLHNLPFYGRAVMCVDDPVVRELLPRVGRHITTYGFSDDADVRIESYRQVGPQGHFTLSRQDKPLMTVTLNAPGRHNALNAAAAVAVATEEGIDDADILRALAGFQGTGRRFDFLGEFPLEPVNGKSGSAMLVDDYGHHPTEVDATLKAARAGWPDKRLVMVFQPHRYTRTRDLYDDFANVLSQVDVLLMLDVYSAGETAIPGADSRSLCRTIRSRGKLDPILVSDADTVPETLAQLLQADDLVLVQGAGNVGKVARKLAELKLQPQKKEEEHHGR</sequence>
<evidence type="ECO:0000255" key="1">
    <source>
        <dbReference type="HAMAP-Rule" id="MF_00046"/>
    </source>
</evidence>
<name>MURC_SERP5</name>
<feature type="chain" id="PRO_1000057319" description="UDP-N-acetylmuramate--L-alanine ligase">
    <location>
        <begin position="1"/>
        <end position="492"/>
    </location>
</feature>
<feature type="binding site" evidence="1">
    <location>
        <begin position="126"/>
        <end position="132"/>
    </location>
    <ligand>
        <name>ATP</name>
        <dbReference type="ChEBI" id="CHEBI:30616"/>
    </ligand>
</feature>
<organism>
    <name type="scientific">Serratia proteamaculans (strain 568)</name>
    <dbReference type="NCBI Taxonomy" id="399741"/>
    <lineage>
        <taxon>Bacteria</taxon>
        <taxon>Pseudomonadati</taxon>
        <taxon>Pseudomonadota</taxon>
        <taxon>Gammaproteobacteria</taxon>
        <taxon>Enterobacterales</taxon>
        <taxon>Yersiniaceae</taxon>
        <taxon>Serratia</taxon>
    </lineage>
</organism>
<comment type="function">
    <text evidence="1">Cell wall formation.</text>
</comment>
<comment type="catalytic activity">
    <reaction evidence="1">
        <text>UDP-N-acetyl-alpha-D-muramate + L-alanine + ATP = UDP-N-acetyl-alpha-D-muramoyl-L-alanine + ADP + phosphate + H(+)</text>
        <dbReference type="Rhea" id="RHEA:23372"/>
        <dbReference type="ChEBI" id="CHEBI:15378"/>
        <dbReference type="ChEBI" id="CHEBI:30616"/>
        <dbReference type="ChEBI" id="CHEBI:43474"/>
        <dbReference type="ChEBI" id="CHEBI:57972"/>
        <dbReference type="ChEBI" id="CHEBI:70757"/>
        <dbReference type="ChEBI" id="CHEBI:83898"/>
        <dbReference type="ChEBI" id="CHEBI:456216"/>
        <dbReference type="EC" id="6.3.2.8"/>
    </reaction>
</comment>
<comment type="pathway">
    <text evidence="1">Cell wall biogenesis; peptidoglycan biosynthesis.</text>
</comment>
<comment type="subcellular location">
    <subcellularLocation>
        <location evidence="1">Cytoplasm</location>
    </subcellularLocation>
</comment>
<comment type="similarity">
    <text evidence="1">Belongs to the MurCDEF family.</text>
</comment>
<proteinExistence type="inferred from homology"/>
<dbReference type="EC" id="6.3.2.8" evidence="1"/>
<dbReference type="EMBL" id="CP000826">
    <property type="protein sequence ID" value="ABV39868.1"/>
    <property type="molecule type" value="Genomic_DNA"/>
</dbReference>
<dbReference type="SMR" id="A8G9S8"/>
<dbReference type="STRING" id="399741.Spro_0762"/>
<dbReference type="KEGG" id="spe:Spro_0762"/>
<dbReference type="eggNOG" id="COG0773">
    <property type="taxonomic scope" value="Bacteria"/>
</dbReference>
<dbReference type="HOGENOM" id="CLU_028104_2_2_6"/>
<dbReference type="OrthoDB" id="9804126at2"/>
<dbReference type="UniPathway" id="UPA00219"/>
<dbReference type="GO" id="GO:0005737">
    <property type="term" value="C:cytoplasm"/>
    <property type="evidence" value="ECO:0007669"/>
    <property type="project" value="UniProtKB-SubCell"/>
</dbReference>
<dbReference type="GO" id="GO:0005524">
    <property type="term" value="F:ATP binding"/>
    <property type="evidence" value="ECO:0007669"/>
    <property type="project" value="UniProtKB-UniRule"/>
</dbReference>
<dbReference type="GO" id="GO:0008763">
    <property type="term" value="F:UDP-N-acetylmuramate-L-alanine ligase activity"/>
    <property type="evidence" value="ECO:0007669"/>
    <property type="project" value="UniProtKB-UniRule"/>
</dbReference>
<dbReference type="GO" id="GO:0051301">
    <property type="term" value="P:cell division"/>
    <property type="evidence" value="ECO:0007669"/>
    <property type="project" value="UniProtKB-KW"/>
</dbReference>
<dbReference type="GO" id="GO:0071555">
    <property type="term" value="P:cell wall organization"/>
    <property type="evidence" value="ECO:0007669"/>
    <property type="project" value="UniProtKB-KW"/>
</dbReference>
<dbReference type="GO" id="GO:0009252">
    <property type="term" value="P:peptidoglycan biosynthetic process"/>
    <property type="evidence" value="ECO:0007669"/>
    <property type="project" value="UniProtKB-UniRule"/>
</dbReference>
<dbReference type="GO" id="GO:0008360">
    <property type="term" value="P:regulation of cell shape"/>
    <property type="evidence" value="ECO:0007669"/>
    <property type="project" value="UniProtKB-KW"/>
</dbReference>
<dbReference type="FunFam" id="3.40.1190.10:FF:000001">
    <property type="entry name" value="UDP-N-acetylmuramate--L-alanine ligase"/>
    <property type="match status" value="1"/>
</dbReference>
<dbReference type="FunFam" id="3.40.50.720:FF:000046">
    <property type="entry name" value="UDP-N-acetylmuramate--L-alanine ligase"/>
    <property type="match status" value="1"/>
</dbReference>
<dbReference type="FunFam" id="3.90.190.20:FF:000001">
    <property type="entry name" value="UDP-N-acetylmuramate--L-alanine ligase"/>
    <property type="match status" value="1"/>
</dbReference>
<dbReference type="Gene3D" id="3.90.190.20">
    <property type="entry name" value="Mur ligase, C-terminal domain"/>
    <property type="match status" value="1"/>
</dbReference>
<dbReference type="Gene3D" id="3.40.1190.10">
    <property type="entry name" value="Mur-like, catalytic domain"/>
    <property type="match status" value="1"/>
</dbReference>
<dbReference type="Gene3D" id="3.40.50.720">
    <property type="entry name" value="NAD(P)-binding Rossmann-like Domain"/>
    <property type="match status" value="1"/>
</dbReference>
<dbReference type="HAMAP" id="MF_00046">
    <property type="entry name" value="MurC"/>
    <property type="match status" value="1"/>
</dbReference>
<dbReference type="InterPro" id="IPR036565">
    <property type="entry name" value="Mur-like_cat_sf"/>
</dbReference>
<dbReference type="InterPro" id="IPR004101">
    <property type="entry name" value="Mur_ligase_C"/>
</dbReference>
<dbReference type="InterPro" id="IPR036615">
    <property type="entry name" value="Mur_ligase_C_dom_sf"/>
</dbReference>
<dbReference type="InterPro" id="IPR013221">
    <property type="entry name" value="Mur_ligase_cen"/>
</dbReference>
<dbReference type="InterPro" id="IPR000713">
    <property type="entry name" value="Mur_ligase_N"/>
</dbReference>
<dbReference type="InterPro" id="IPR050061">
    <property type="entry name" value="MurCDEF_pg_biosynth"/>
</dbReference>
<dbReference type="InterPro" id="IPR005758">
    <property type="entry name" value="UDP-N-AcMur_Ala_ligase_MurC"/>
</dbReference>
<dbReference type="NCBIfam" id="TIGR01082">
    <property type="entry name" value="murC"/>
    <property type="match status" value="1"/>
</dbReference>
<dbReference type="PANTHER" id="PTHR43445:SF3">
    <property type="entry name" value="UDP-N-ACETYLMURAMATE--L-ALANINE LIGASE"/>
    <property type="match status" value="1"/>
</dbReference>
<dbReference type="PANTHER" id="PTHR43445">
    <property type="entry name" value="UDP-N-ACETYLMURAMATE--L-ALANINE LIGASE-RELATED"/>
    <property type="match status" value="1"/>
</dbReference>
<dbReference type="Pfam" id="PF01225">
    <property type="entry name" value="Mur_ligase"/>
    <property type="match status" value="1"/>
</dbReference>
<dbReference type="Pfam" id="PF02875">
    <property type="entry name" value="Mur_ligase_C"/>
    <property type="match status" value="1"/>
</dbReference>
<dbReference type="Pfam" id="PF08245">
    <property type="entry name" value="Mur_ligase_M"/>
    <property type="match status" value="1"/>
</dbReference>
<dbReference type="SUPFAM" id="SSF51984">
    <property type="entry name" value="MurCD N-terminal domain"/>
    <property type="match status" value="1"/>
</dbReference>
<dbReference type="SUPFAM" id="SSF53623">
    <property type="entry name" value="MurD-like peptide ligases, catalytic domain"/>
    <property type="match status" value="1"/>
</dbReference>
<dbReference type="SUPFAM" id="SSF53244">
    <property type="entry name" value="MurD-like peptide ligases, peptide-binding domain"/>
    <property type="match status" value="1"/>
</dbReference>
<gene>
    <name evidence="1" type="primary">murC</name>
    <name type="ordered locus">Spro_0762</name>
</gene>
<keyword id="KW-0067">ATP-binding</keyword>
<keyword id="KW-0131">Cell cycle</keyword>
<keyword id="KW-0132">Cell division</keyword>
<keyword id="KW-0133">Cell shape</keyword>
<keyword id="KW-0961">Cell wall biogenesis/degradation</keyword>
<keyword id="KW-0963">Cytoplasm</keyword>
<keyword id="KW-0436">Ligase</keyword>
<keyword id="KW-0547">Nucleotide-binding</keyword>
<keyword id="KW-0573">Peptidoglycan synthesis</keyword>